<feature type="chain" id="PRO_0000223098" description="E3 ubiquitin-protein ligase Zswim2">
    <location>
        <begin position="1"/>
        <end position="631"/>
    </location>
</feature>
<feature type="zinc finger region" description="SWIM-type" evidence="3">
    <location>
        <begin position="54"/>
        <end position="87"/>
    </location>
</feature>
<feature type="zinc finger region" description="RING-type 1" evidence="1">
    <location>
        <begin position="147"/>
        <end position="199"/>
    </location>
</feature>
<feature type="zinc finger region" description="ZZ-type" evidence="2">
    <location>
        <begin position="230"/>
        <end position="281"/>
    </location>
</feature>
<feature type="zinc finger region" description="RING-type 2" evidence="1">
    <location>
        <begin position="344"/>
        <end position="386"/>
    </location>
</feature>
<feature type="region of interest" description="UBE2D1-binding">
    <location>
        <begin position="139"/>
        <end position="348"/>
    </location>
</feature>
<feature type="region of interest" description="Disordered" evidence="4">
    <location>
        <begin position="589"/>
        <end position="614"/>
    </location>
</feature>
<feature type="compositionally biased region" description="Basic residues" evidence="4">
    <location>
        <begin position="599"/>
        <end position="608"/>
    </location>
</feature>
<feature type="binding site" evidence="2">
    <location>
        <position position="235"/>
    </location>
    <ligand>
        <name>Zn(2+)</name>
        <dbReference type="ChEBI" id="CHEBI:29105"/>
        <label>1</label>
    </ligand>
</feature>
<feature type="binding site" evidence="2">
    <location>
        <position position="238"/>
    </location>
    <ligand>
        <name>Zn(2+)</name>
        <dbReference type="ChEBI" id="CHEBI:29105"/>
        <label>1</label>
    </ligand>
</feature>
<feature type="binding site" evidence="2">
    <location>
        <position position="250"/>
    </location>
    <ligand>
        <name>Zn(2+)</name>
        <dbReference type="ChEBI" id="CHEBI:29105"/>
        <label>2</label>
    </ligand>
</feature>
<feature type="binding site" evidence="2">
    <location>
        <position position="253"/>
    </location>
    <ligand>
        <name>Zn(2+)</name>
        <dbReference type="ChEBI" id="CHEBI:29105"/>
        <label>2</label>
    </ligand>
</feature>
<feature type="binding site" evidence="2">
    <location>
        <position position="259"/>
    </location>
    <ligand>
        <name>Zn(2+)</name>
        <dbReference type="ChEBI" id="CHEBI:29105"/>
        <label>1</label>
    </ligand>
</feature>
<feature type="binding site" evidence="2">
    <location>
        <position position="262"/>
    </location>
    <ligand>
        <name>Zn(2+)</name>
        <dbReference type="ChEBI" id="CHEBI:29105"/>
        <label>1</label>
    </ligand>
</feature>
<feature type="binding site" evidence="2">
    <location>
        <position position="268"/>
    </location>
    <ligand>
        <name>Zn(2+)</name>
        <dbReference type="ChEBI" id="CHEBI:29105"/>
        <label>2</label>
    </ligand>
</feature>
<feature type="binding site" evidence="2">
    <location>
        <position position="271"/>
    </location>
    <ligand>
        <name>Zn(2+)</name>
        <dbReference type="ChEBI" id="CHEBI:29105"/>
        <label>2</label>
    </ligand>
</feature>
<feature type="mutagenesis site" description="Abrogates ubiquitination activity and the ability to promote DR4- and Fas-induced apoptosis." evidence="5">
    <original>C</original>
    <variation>S</variation>
    <location>
        <position position="66"/>
    </location>
</feature>
<feature type="mutagenesis site" description="Abrogates ubiquitination activity." evidence="5">
    <original>C</original>
    <variation>S</variation>
    <location>
        <position position="168"/>
    </location>
</feature>
<reference key="1">
    <citation type="journal article" date="2005" name="Science">
        <title>The transcriptional landscape of the mammalian genome.</title>
        <authorList>
            <person name="Carninci P."/>
            <person name="Kasukawa T."/>
            <person name="Katayama S."/>
            <person name="Gough J."/>
            <person name="Frith M.C."/>
            <person name="Maeda N."/>
            <person name="Oyama R."/>
            <person name="Ravasi T."/>
            <person name="Lenhard B."/>
            <person name="Wells C."/>
            <person name="Kodzius R."/>
            <person name="Shimokawa K."/>
            <person name="Bajic V.B."/>
            <person name="Brenner S.E."/>
            <person name="Batalov S."/>
            <person name="Forrest A.R."/>
            <person name="Zavolan M."/>
            <person name="Davis M.J."/>
            <person name="Wilming L.G."/>
            <person name="Aidinis V."/>
            <person name="Allen J.E."/>
            <person name="Ambesi-Impiombato A."/>
            <person name="Apweiler R."/>
            <person name="Aturaliya R.N."/>
            <person name="Bailey T.L."/>
            <person name="Bansal M."/>
            <person name="Baxter L."/>
            <person name="Beisel K.W."/>
            <person name="Bersano T."/>
            <person name="Bono H."/>
            <person name="Chalk A.M."/>
            <person name="Chiu K.P."/>
            <person name="Choudhary V."/>
            <person name="Christoffels A."/>
            <person name="Clutterbuck D.R."/>
            <person name="Crowe M.L."/>
            <person name="Dalla E."/>
            <person name="Dalrymple B.P."/>
            <person name="de Bono B."/>
            <person name="Della Gatta G."/>
            <person name="di Bernardo D."/>
            <person name="Down T."/>
            <person name="Engstrom P."/>
            <person name="Fagiolini M."/>
            <person name="Faulkner G."/>
            <person name="Fletcher C.F."/>
            <person name="Fukushima T."/>
            <person name="Furuno M."/>
            <person name="Futaki S."/>
            <person name="Gariboldi M."/>
            <person name="Georgii-Hemming P."/>
            <person name="Gingeras T.R."/>
            <person name="Gojobori T."/>
            <person name="Green R.E."/>
            <person name="Gustincich S."/>
            <person name="Harbers M."/>
            <person name="Hayashi Y."/>
            <person name="Hensch T.K."/>
            <person name="Hirokawa N."/>
            <person name="Hill D."/>
            <person name="Huminiecki L."/>
            <person name="Iacono M."/>
            <person name="Ikeo K."/>
            <person name="Iwama A."/>
            <person name="Ishikawa T."/>
            <person name="Jakt M."/>
            <person name="Kanapin A."/>
            <person name="Katoh M."/>
            <person name="Kawasawa Y."/>
            <person name="Kelso J."/>
            <person name="Kitamura H."/>
            <person name="Kitano H."/>
            <person name="Kollias G."/>
            <person name="Krishnan S.P."/>
            <person name="Kruger A."/>
            <person name="Kummerfeld S.K."/>
            <person name="Kurochkin I.V."/>
            <person name="Lareau L.F."/>
            <person name="Lazarevic D."/>
            <person name="Lipovich L."/>
            <person name="Liu J."/>
            <person name="Liuni S."/>
            <person name="McWilliam S."/>
            <person name="Madan Babu M."/>
            <person name="Madera M."/>
            <person name="Marchionni L."/>
            <person name="Matsuda H."/>
            <person name="Matsuzawa S."/>
            <person name="Miki H."/>
            <person name="Mignone F."/>
            <person name="Miyake S."/>
            <person name="Morris K."/>
            <person name="Mottagui-Tabar S."/>
            <person name="Mulder N."/>
            <person name="Nakano N."/>
            <person name="Nakauchi H."/>
            <person name="Ng P."/>
            <person name="Nilsson R."/>
            <person name="Nishiguchi S."/>
            <person name="Nishikawa S."/>
            <person name="Nori F."/>
            <person name="Ohara O."/>
            <person name="Okazaki Y."/>
            <person name="Orlando V."/>
            <person name="Pang K.C."/>
            <person name="Pavan W.J."/>
            <person name="Pavesi G."/>
            <person name="Pesole G."/>
            <person name="Petrovsky N."/>
            <person name="Piazza S."/>
            <person name="Reed J."/>
            <person name="Reid J.F."/>
            <person name="Ring B.Z."/>
            <person name="Ringwald M."/>
            <person name="Rost B."/>
            <person name="Ruan Y."/>
            <person name="Salzberg S.L."/>
            <person name="Sandelin A."/>
            <person name="Schneider C."/>
            <person name="Schoenbach C."/>
            <person name="Sekiguchi K."/>
            <person name="Semple C.A."/>
            <person name="Seno S."/>
            <person name="Sessa L."/>
            <person name="Sheng Y."/>
            <person name="Shibata Y."/>
            <person name="Shimada H."/>
            <person name="Shimada K."/>
            <person name="Silva D."/>
            <person name="Sinclair B."/>
            <person name="Sperling S."/>
            <person name="Stupka E."/>
            <person name="Sugiura K."/>
            <person name="Sultana R."/>
            <person name="Takenaka Y."/>
            <person name="Taki K."/>
            <person name="Tammoja K."/>
            <person name="Tan S.L."/>
            <person name="Tang S."/>
            <person name="Taylor M.S."/>
            <person name="Tegner J."/>
            <person name="Teichmann S.A."/>
            <person name="Ueda H.R."/>
            <person name="van Nimwegen E."/>
            <person name="Verardo R."/>
            <person name="Wei C.L."/>
            <person name="Yagi K."/>
            <person name="Yamanishi H."/>
            <person name="Zabarovsky E."/>
            <person name="Zhu S."/>
            <person name="Zimmer A."/>
            <person name="Hide W."/>
            <person name="Bult C."/>
            <person name="Grimmond S.M."/>
            <person name="Teasdale R.D."/>
            <person name="Liu E.T."/>
            <person name="Brusic V."/>
            <person name="Quackenbush J."/>
            <person name="Wahlestedt C."/>
            <person name="Mattick J.S."/>
            <person name="Hume D.A."/>
            <person name="Kai C."/>
            <person name="Sasaki D."/>
            <person name="Tomaru Y."/>
            <person name="Fukuda S."/>
            <person name="Kanamori-Katayama M."/>
            <person name="Suzuki M."/>
            <person name="Aoki J."/>
            <person name="Arakawa T."/>
            <person name="Iida J."/>
            <person name="Imamura K."/>
            <person name="Itoh M."/>
            <person name="Kato T."/>
            <person name="Kawaji H."/>
            <person name="Kawagashira N."/>
            <person name="Kawashima T."/>
            <person name="Kojima M."/>
            <person name="Kondo S."/>
            <person name="Konno H."/>
            <person name="Nakano K."/>
            <person name="Ninomiya N."/>
            <person name="Nishio T."/>
            <person name="Okada M."/>
            <person name="Plessy C."/>
            <person name="Shibata K."/>
            <person name="Shiraki T."/>
            <person name="Suzuki S."/>
            <person name="Tagami M."/>
            <person name="Waki K."/>
            <person name="Watahiki A."/>
            <person name="Okamura-Oho Y."/>
            <person name="Suzuki H."/>
            <person name="Kawai J."/>
            <person name="Hayashizaki Y."/>
        </authorList>
    </citation>
    <scope>NUCLEOTIDE SEQUENCE [LARGE SCALE MRNA]</scope>
    <source>
        <strain>C57BL/6J</strain>
        <tissue>Testis</tissue>
    </source>
</reference>
<reference key="2">
    <citation type="journal article" date="2006" name="Biochem. J.">
        <title>MEX is a testis-specific E3 ubiquitin ligase that promotes death receptor-induced apoptosis.</title>
        <authorList>
            <person name="Nishito Y."/>
            <person name="Hasegawa M."/>
            <person name="Inohara N."/>
            <person name="Nunez G."/>
        </authorList>
    </citation>
    <scope>TISSUE SPECIFICITY</scope>
    <scope>FUNCTION</scope>
    <scope>UBIQUITINATION</scope>
    <scope>SUBUNIT</scope>
    <scope>DOMAIN</scope>
    <scope>INTERACTION WITH UBE2D1</scope>
    <scope>MUTAGENESIS OF CYS-66 AND CYS-168</scope>
</reference>
<reference key="3">
    <citation type="journal article" date="2022" name="BMC Biol.">
        <title>The testis-specific E3 ubiquitin ligase RNF133 is required for fecundity in mice.</title>
        <authorList>
            <person name="Nozawa K."/>
            <person name="Fujihara Y."/>
            <person name="Devlin D.J."/>
            <person name="Deras R.E."/>
            <person name="Kent K."/>
            <person name="Larina I.V."/>
            <person name="Umezu K."/>
            <person name="Yu Z."/>
            <person name="Sutton C.M."/>
            <person name="Ye Q."/>
            <person name="Dean L.K."/>
            <person name="Emori C."/>
            <person name="Ikawa M."/>
            <person name="Garcia T.X."/>
            <person name="Matzuk M.M."/>
        </authorList>
    </citation>
    <scope>DISRUPTION PHENOTYPE</scope>
    <scope>TISSUE SPECIFICITY</scope>
    <scope>DEVELOPMENTAL STAGE</scope>
</reference>
<keyword id="KW-0053">Apoptosis</keyword>
<keyword id="KW-0479">Metal-binding</keyword>
<keyword id="KW-1185">Reference proteome</keyword>
<keyword id="KW-0677">Repeat</keyword>
<keyword id="KW-0808">Transferase</keyword>
<keyword id="KW-0832">Ubl conjugation</keyword>
<keyword id="KW-0833">Ubl conjugation pathway</keyword>
<keyword id="KW-0862">Zinc</keyword>
<keyword id="KW-0863">Zinc-finger</keyword>
<gene>
    <name type="primary">Zswim2</name>
</gene>
<organism>
    <name type="scientific">Mus musculus</name>
    <name type="common">Mouse</name>
    <dbReference type="NCBI Taxonomy" id="10090"/>
    <lineage>
        <taxon>Eukaryota</taxon>
        <taxon>Metazoa</taxon>
        <taxon>Chordata</taxon>
        <taxon>Craniata</taxon>
        <taxon>Vertebrata</taxon>
        <taxon>Euteleostomi</taxon>
        <taxon>Mammalia</taxon>
        <taxon>Eutheria</taxon>
        <taxon>Euarchontoglires</taxon>
        <taxon>Glires</taxon>
        <taxon>Rodentia</taxon>
        <taxon>Myomorpha</taxon>
        <taxon>Muroidea</taxon>
        <taxon>Muridae</taxon>
        <taxon>Murinae</taxon>
        <taxon>Mus</taxon>
        <taxon>Mus</taxon>
    </lineage>
</organism>
<accession>Q9D9X6</accession>
<evidence type="ECO:0000255" key="1">
    <source>
        <dbReference type="PROSITE-ProRule" id="PRU00175"/>
    </source>
</evidence>
<evidence type="ECO:0000255" key="2">
    <source>
        <dbReference type="PROSITE-ProRule" id="PRU00228"/>
    </source>
</evidence>
<evidence type="ECO:0000255" key="3">
    <source>
        <dbReference type="PROSITE-ProRule" id="PRU00325"/>
    </source>
</evidence>
<evidence type="ECO:0000256" key="4">
    <source>
        <dbReference type="SAM" id="MobiDB-lite"/>
    </source>
</evidence>
<evidence type="ECO:0000269" key="5">
    <source>
    </source>
</evidence>
<evidence type="ECO:0000269" key="6">
    <source>
    </source>
</evidence>
<sequence length="631" mass="71793">MLRGGCKASEKRRHLSESLSWQQDQALSSSIYLLRQIGPTGFLLKEEEPEKGDFRVLLGNPHECSCPTFLKRGELCKHICWVLLKKFKLPRNHESAFQLGLTEGEINDLLRGIHQVQAPQLRASDETAQVEEDGYLKQKDINAGDICPICQEVLLEKKLPVTFCRFGCGNNVHIKCMRILANYQDTGSDSSVLRCPLCREEFAPLKVILEEFKNSNKLITISEKERLDKHLGIPCNNCNQLPIEGRCYKCTECVEYHLCQECFDSCCHSSHAFASREKRNQRWRSVEKRSEVMKYLNTENEGEAKPGCFQEKQGQFYTPKHVVKSLPLLMITKKSKLLAPGYQCRLCLKSFSFGQYTRLLPCTHKFHRKCIDNWLLHKCNSCPIDRQVIYNPLIWKGIATDGQAHQLASSKDIACLSKQQEPKLFIPGTGLVLKGKRMGVLPSIPQYNSKVLTTLQNPSDNYQNITMDDLCSVKLDNSNSRKLVFGYKISKQFPTYLKNPTTGQTPSQTFLPSLPHKNIICLTGRESPHIYEKDHIGQSQKTSRGYEHINYNTRKSLGSRLRQHKRSSALSSEDLNLTINLGTTKLSLSKRQNNSMGKVRQKLGHPPRRPAYPPLQTQNAALSLIMQGIQL</sequence>
<proteinExistence type="evidence at protein level"/>
<protein>
    <recommendedName>
        <fullName>E3 ubiquitin-protein ligase Zswim2</fullName>
        <ecNumber>2.3.2.27</ecNumber>
    </recommendedName>
    <alternativeName>
        <fullName>MEKK1-related protein X</fullName>
        <shortName>MEX</shortName>
    </alternativeName>
    <alternativeName>
        <fullName>RING-type E3 ubiquitin transferase Zswim2</fullName>
    </alternativeName>
    <alternativeName>
        <fullName>ZZ-type zinc finger-containing protein 2</fullName>
    </alternativeName>
    <alternativeName>
        <fullName>Zinc finger SWIM domain-containing protein 2</fullName>
    </alternativeName>
</protein>
<dbReference type="EC" id="2.3.2.27"/>
<dbReference type="EMBL" id="AK006367">
    <property type="protein sequence ID" value="BAB24549.1"/>
    <property type="molecule type" value="mRNA"/>
</dbReference>
<dbReference type="CCDS" id="CCDS16183.1"/>
<dbReference type="RefSeq" id="NP_082240.1">
    <property type="nucleotide sequence ID" value="NM_027964.3"/>
</dbReference>
<dbReference type="SMR" id="Q9D9X6"/>
<dbReference type="BioGRID" id="214986">
    <property type="interactions" value="4"/>
</dbReference>
<dbReference type="FunCoup" id="Q9D9X6">
    <property type="interactions" value="2"/>
</dbReference>
<dbReference type="STRING" id="10090.ENSMUSP00000044913"/>
<dbReference type="iPTMnet" id="Q9D9X6"/>
<dbReference type="PhosphoSitePlus" id="Q9D9X6"/>
<dbReference type="PaxDb" id="10090-ENSMUSP00000044913"/>
<dbReference type="ProteomicsDB" id="302154"/>
<dbReference type="Antibodypedia" id="34014">
    <property type="antibodies" value="100 antibodies from 17 providers"/>
</dbReference>
<dbReference type="DNASU" id="71861"/>
<dbReference type="Ensembl" id="ENSMUST00000038223.8">
    <property type="protein sequence ID" value="ENSMUSP00000044913.2"/>
    <property type="gene ID" value="ENSMUSG00000034552.9"/>
</dbReference>
<dbReference type="GeneID" id="71861"/>
<dbReference type="KEGG" id="mmu:71861"/>
<dbReference type="UCSC" id="uc008kif.1">
    <property type="organism name" value="mouse"/>
</dbReference>
<dbReference type="AGR" id="MGI:1919111"/>
<dbReference type="CTD" id="151112"/>
<dbReference type="MGI" id="MGI:1919111">
    <property type="gene designation" value="Zswim2"/>
</dbReference>
<dbReference type="VEuPathDB" id="HostDB:ENSMUSG00000034552"/>
<dbReference type="eggNOG" id="KOG0800">
    <property type="taxonomic scope" value="Eukaryota"/>
</dbReference>
<dbReference type="GeneTree" id="ENSGT00390000006826"/>
<dbReference type="HOGENOM" id="CLU_029121_0_0_1"/>
<dbReference type="InParanoid" id="Q9D9X6"/>
<dbReference type="OMA" id="YNPLTWK"/>
<dbReference type="OrthoDB" id="8062037at2759"/>
<dbReference type="PhylomeDB" id="Q9D9X6"/>
<dbReference type="TreeFam" id="TF333237"/>
<dbReference type="BioGRID-ORCS" id="71861">
    <property type="hits" value="1 hit in 78 CRISPR screens"/>
</dbReference>
<dbReference type="PRO" id="PR:Q9D9X6"/>
<dbReference type="Proteomes" id="UP000000589">
    <property type="component" value="Chromosome 2"/>
</dbReference>
<dbReference type="RNAct" id="Q9D9X6">
    <property type="molecule type" value="protein"/>
</dbReference>
<dbReference type="Bgee" id="ENSMUSG00000034552">
    <property type="expression patterns" value="Expressed in spermatid and 33 other cell types or tissues"/>
</dbReference>
<dbReference type="ExpressionAtlas" id="Q9D9X6">
    <property type="expression patterns" value="baseline and differential"/>
</dbReference>
<dbReference type="GO" id="GO:0061630">
    <property type="term" value="F:ubiquitin protein ligase activity"/>
    <property type="evidence" value="ECO:0000314"/>
    <property type="project" value="MGI"/>
</dbReference>
<dbReference type="GO" id="GO:0004842">
    <property type="term" value="F:ubiquitin-protein transferase activity"/>
    <property type="evidence" value="ECO:0000314"/>
    <property type="project" value="UniProtKB"/>
</dbReference>
<dbReference type="GO" id="GO:0008270">
    <property type="term" value="F:zinc ion binding"/>
    <property type="evidence" value="ECO:0007669"/>
    <property type="project" value="UniProtKB-KW"/>
</dbReference>
<dbReference type="GO" id="GO:0006915">
    <property type="term" value="P:apoptotic process"/>
    <property type="evidence" value="ECO:0007669"/>
    <property type="project" value="UniProtKB-KW"/>
</dbReference>
<dbReference type="GO" id="GO:1902043">
    <property type="term" value="P:positive regulation of extrinsic apoptotic signaling pathway via death domain receptors"/>
    <property type="evidence" value="ECO:0000314"/>
    <property type="project" value="MGI"/>
</dbReference>
<dbReference type="GO" id="GO:0000209">
    <property type="term" value="P:protein polyubiquitination"/>
    <property type="evidence" value="ECO:0000314"/>
    <property type="project" value="UniProtKB"/>
</dbReference>
<dbReference type="CDD" id="cd16486">
    <property type="entry name" value="mRING-H2-C3H2C2D_ZSWM2"/>
    <property type="match status" value="1"/>
</dbReference>
<dbReference type="CDD" id="cd16494">
    <property type="entry name" value="RING-CH-C4HC3_ZSWM2"/>
    <property type="match status" value="1"/>
</dbReference>
<dbReference type="FunFam" id="3.30.40.10:FF:001134">
    <property type="entry name" value="E3 ubiquitin-protein ligase Zswim2"/>
    <property type="match status" value="1"/>
</dbReference>
<dbReference type="FunFam" id="3.30.40.10:FF:001047">
    <property type="entry name" value="Zinc finger, SWIM domain containing 2"/>
    <property type="match status" value="1"/>
</dbReference>
<dbReference type="Gene3D" id="3.30.60.90">
    <property type="match status" value="1"/>
</dbReference>
<dbReference type="Gene3D" id="3.30.40.10">
    <property type="entry name" value="Zinc/RING finger domain, C3HC4 (zinc finger)"/>
    <property type="match status" value="2"/>
</dbReference>
<dbReference type="InterPro" id="IPR001841">
    <property type="entry name" value="Znf_RING"/>
</dbReference>
<dbReference type="InterPro" id="IPR013083">
    <property type="entry name" value="Znf_RING/FYVE/PHD"/>
</dbReference>
<dbReference type="InterPro" id="IPR007527">
    <property type="entry name" value="Znf_SWIM"/>
</dbReference>
<dbReference type="InterPro" id="IPR000433">
    <property type="entry name" value="Znf_ZZ"/>
</dbReference>
<dbReference type="InterPro" id="IPR043145">
    <property type="entry name" value="Znf_ZZ_sf"/>
</dbReference>
<dbReference type="InterPro" id="IPR039903">
    <property type="entry name" value="Zswim2"/>
</dbReference>
<dbReference type="PANTHER" id="PTHR21540:SF3">
    <property type="entry name" value="E3 UBIQUITIN-PROTEIN LIGASE ZSWIM2"/>
    <property type="match status" value="1"/>
</dbReference>
<dbReference type="PANTHER" id="PTHR21540">
    <property type="entry name" value="RING FINGER AND SWIM DOMAIN-CONTAINING PROTEIN 2"/>
    <property type="match status" value="1"/>
</dbReference>
<dbReference type="Pfam" id="PF04434">
    <property type="entry name" value="SWIM"/>
    <property type="match status" value="1"/>
</dbReference>
<dbReference type="Pfam" id="PF13639">
    <property type="entry name" value="zf-RING_2"/>
    <property type="match status" value="1"/>
</dbReference>
<dbReference type="SMART" id="SM00184">
    <property type="entry name" value="RING"/>
    <property type="match status" value="2"/>
</dbReference>
<dbReference type="SMART" id="SM00291">
    <property type="entry name" value="ZnF_ZZ"/>
    <property type="match status" value="1"/>
</dbReference>
<dbReference type="SUPFAM" id="SSF57850">
    <property type="entry name" value="RING/U-box"/>
    <property type="match status" value="3"/>
</dbReference>
<dbReference type="PROSITE" id="PS50089">
    <property type="entry name" value="ZF_RING_2"/>
    <property type="match status" value="2"/>
</dbReference>
<dbReference type="PROSITE" id="PS50966">
    <property type="entry name" value="ZF_SWIM"/>
    <property type="match status" value="1"/>
</dbReference>
<dbReference type="PROSITE" id="PS01357">
    <property type="entry name" value="ZF_ZZ_1"/>
    <property type="match status" value="1"/>
</dbReference>
<dbReference type="PROSITE" id="PS50135">
    <property type="entry name" value="ZF_ZZ_2"/>
    <property type="match status" value="1"/>
</dbReference>
<name>ZSWM2_MOUSE</name>
<comment type="function">
    <text evidence="5">E3 ubiquitin-protein ligase involved in the regulation of Fas-, DR3- and DR4-mediated apoptosis. Functions in conjunction with the UBE2D1, UBE2D3 and UBE2E1 E2 ubiquitin-conjugating enzymes.</text>
</comment>
<comment type="catalytic activity">
    <reaction>
        <text>S-ubiquitinyl-[E2 ubiquitin-conjugating enzyme]-L-cysteine + [acceptor protein]-L-lysine = [E2 ubiquitin-conjugating enzyme]-L-cysteine + N(6)-ubiquitinyl-[acceptor protein]-L-lysine.</text>
        <dbReference type="EC" id="2.3.2.27"/>
    </reaction>
</comment>
<comment type="subunit">
    <text evidence="5">Dimer. Interacts with UBE2D1.</text>
</comment>
<comment type="tissue specificity">
    <text evidence="5 6">Expressed only in testis.</text>
</comment>
<comment type="developmental stage">
    <text evidence="6">Expression begins in the testis at day 10 and increases dramatically from day 21 and thereafter.</text>
</comment>
<comment type="domain">
    <text evidence="5">The SWIM-type zinc finger is required for ubiquitination activity.</text>
</comment>
<comment type="PTM">
    <text evidence="5">Polyubiquitinated. Polyubiquitination is followed by degradation via the proteasome.</text>
</comment>
<comment type="disruption phenotype">
    <text evidence="6">Male mutants fecundity is normal.</text>
</comment>